<dbReference type="EMBL" id="CP000551">
    <property type="protein sequence ID" value="ABM69563.1"/>
    <property type="molecule type" value="Genomic_DNA"/>
</dbReference>
<dbReference type="RefSeq" id="WP_002805124.1">
    <property type="nucleotide sequence ID" value="NC_008816.1"/>
</dbReference>
<dbReference type="SMR" id="A2BP52"/>
<dbReference type="STRING" id="146891.A9601_02751"/>
<dbReference type="KEGG" id="pmb:A9601_02751"/>
<dbReference type="HOGENOM" id="CLU_212150_0_0_3"/>
<dbReference type="Proteomes" id="UP000002590">
    <property type="component" value="Chromosome"/>
</dbReference>
<dbReference type="GO" id="GO:0009539">
    <property type="term" value="C:photosystem II reaction center"/>
    <property type="evidence" value="ECO:0007669"/>
    <property type="project" value="InterPro"/>
</dbReference>
<dbReference type="GO" id="GO:0031676">
    <property type="term" value="C:plasma membrane-derived thylakoid membrane"/>
    <property type="evidence" value="ECO:0007669"/>
    <property type="project" value="UniProtKB-SubCell"/>
</dbReference>
<dbReference type="GO" id="GO:0015979">
    <property type="term" value="P:photosynthesis"/>
    <property type="evidence" value="ECO:0007669"/>
    <property type="project" value="UniProtKB-UniRule"/>
</dbReference>
<dbReference type="HAMAP" id="MF_01316">
    <property type="entry name" value="PSII_PsbI"/>
    <property type="match status" value="1"/>
</dbReference>
<dbReference type="InterPro" id="IPR003686">
    <property type="entry name" value="PSII_PsbI"/>
</dbReference>
<dbReference type="InterPro" id="IPR037271">
    <property type="entry name" value="PSII_PsbI_sf"/>
</dbReference>
<dbReference type="NCBIfam" id="NF002735">
    <property type="entry name" value="PRK02655.1"/>
    <property type="match status" value="1"/>
</dbReference>
<dbReference type="PANTHER" id="PTHR35772">
    <property type="entry name" value="PHOTOSYSTEM II REACTION CENTER PROTEIN I"/>
    <property type="match status" value="1"/>
</dbReference>
<dbReference type="PANTHER" id="PTHR35772:SF1">
    <property type="entry name" value="PHOTOSYSTEM II REACTION CENTER PROTEIN I"/>
    <property type="match status" value="1"/>
</dbReference>
<dbReference type="Pfam" id="PF02532">
    <property type="entry name" value="PsbI"/>
    <property type="match status" value="1"/>
</dbReference>
<dbReference type="SUPFAM" id="SSF161041">
    <property type="entry name" value="Photosystem II reaction center protein I, PsbI"/>
    <property type="match status" value="1"/>
</dbReference>
<reference key="1">
    <citation type="journal article" date="2007" name="PLoS Genet.">
        <title>Patterns and implications of gene gain and loss in the evolution of Prochlorococcus.</title>
        <authorList>
            <person name="Kettler G.C."/>
            <person name="Martiny A.C."/>
            <person name="Huang K."/>
            <person name="Zucker J."/>
            <person name="Coleman M.L."/>
            <person name="Rodrigue S."/>
            <person name="Chen F."/>
            <person name="Lapidus A."/>
            <person name="Ferriera S."/>
            <person name="Johnson J."/>
            <person name="Steglich C."/>
            <person name="Church G.M."/>
            <person name="Richardson P."/>
            <person name="Chisholm S.W."/>
        </authorList>
    </citation>
    <scope>NUCLEOTIDE SEQUENCE [LARGE SCALE GENOMIC DNA]</scope>
    <source>
        <strain>AS9601</strain>
    </source>
</reference>
<protein>
    <recommendedName>
        <fullName evidence="1">Photosystem II reaction center protein I</fullName>
        <shortName evidence="1">PSII-I</shortName>
    </recommendedName>
    <alternativeName>
        <fullName evidence="1">PSII 4.4 kDa protein</fullName>
    </alternativeName>
</protein>
<accession>A2BP52</accession>
<organism>
    <name type="scientific">Prochlorococcus marinus (strain AS9601)</name>
    <dbReference type="NCBI Taxonomy" id="146891"/>
    <lineage>
        <taxon>Bacteria</taxon>
        <taxon>Bacillati</taxon>
        <taxon>Cyanobacteriota</taxon>
        <taxon>Cyanophyceae</taxon>
        <taxon>Synechococcales</taxon>
        <taxon>Prochlorococcaceae</taxon>
        <taxon>Prochlorococcus</taxon>
    </lineage>
</organism>
<keyword id="KW-0472">Membrane</keyword>
<keyword id="KW-0602">Photosynthesis</keyword>
<keyword id="KW-0604">Photosystem II</keyword>
<keyword id="KW-0674">Reaction center</keyword>
<keyword id="KW-0793">Thylakoid</keyword>
<keyword id="KW-0812">Transmembrane</keyword>
<keyword id="KW-1133">Transmembrane helix</keyword>
<feature type="chain" id="PRO_0000298294" description="Photosystem II reaction center protein I">
    <location>
        <begin position="1"/>
        <end position="42"/>
    </location>
</feature>
<feature type="transmembrane region" description="Helical" evidence="1">
    <location>
        <begin position="6"/>
        <end position="26"/>
    </location>
</feature>
<evidence type="ECO:0000255" key="1">
    <source>
        <dbReference type="HAMAP-Rule" id="MF_01316"/>
    </source>
</evidence>
<evidence type="ECO:0000305" key="2"/>
<comment type="function">
    <text evidence="1">One of the components of the core complex of photosystem II (PSII), required for its stability and/or assembly. PSII is a light-driven water:plastoquinone oxidoreductase that uses light energy to abstract electrons from H(2)O, generating O(2) and a proton gradient subsequently used for ATP formation. It consists of a core antenna complex that captures photons, and an electron transfer chain that converts photonic excitation into a charge separation.</text>
</comment>
<comment type="subunit">
    <text evidence="2">PSII is composed of 1 copy each of membrane proteins PsbA, PsbB, PsbC, PsbD, PsbE, PsbF, PsbH, PsbI, PsbJ, PsbK, PsbL, PsbM, PsbT, PsbX, PsbY, Psb30/Ycf12, peripheral proteins PsbO, CyanoQ (PsbQ), PsbU, PsbV and a large number of cofactors. It forms dimeric complexes.</text>
</comment>
<comment type="subcellular location">
    <subcellularLocation>
        <location evidence="1">Cellular thylakoid membrane</location>
        <topology evidence="1">Single-pass membrane protein</topology>
    </subcellularLocation>
</comment>
<comment type="similarity">
    <text evidence="1">Belongs to the PsbI family.</text>
</comment>
<gene>
    <name evidence="1" type="primary">psbI</name>
    <name type="ordered locus">A9601_02751</name>
</gene>
<sequence>MLALKISVYTIVFFFVGIFLFGFLASDPTRTPNRKDLESPQD</sequence>
<proteinExistence type="inferred from homology"/>
<name>PSBI_PROMS</name>